<proteinExistence type="inferred from homology"/>
<evidence type="ECO:0000255" key="1">
    <source>
        <dbReference type="HAMAP-Rule" id="MF_00081"/>
    </source>
</evidence>
<gene>
    <name evidence="1" type="primary">hrcA</name>
    <name type="ordered locus">RHECIAT_CH0000403</name>
</gene>
<feature type="chain" id="PRO_1000092827" description="Heat-inducible transcription repressor HrcA">
    <location>
        <begin position="1"/>
        <end position="362"/>
    </location>
</feature>
<dbReference type="EMBL" id="CP001074">
    <property type="protein sequence ID" value="ACE89397.1"/>
    <property type="molecule type" value="Genomic_DNA"/>
</dbReference>
<dbReference type="SMR" id="B3PZA3"/>
<dbReference type="KEGG" id="rec:RHECIAT_CH0000403"/>
<dbReference type="eggNOG" id="COG1420">
    <property type="taxonomic scope" value="Bacteria"/>
</dbReference>
<dbReference type="HOGENOM" id="CLU_050019_0_0_5"/>
<dbReference type="Proteomes" id="UP000008817">
    <property type="component" value="Chromosome"/>
</dbReference>
<dbReference type="GO" id="GO:0003677">
    <property type="term" value="F:DNA binding"/>
    <property type="evidence" value="ECO:0007669"/>
    <property type="project" value="InterPro"/>
</dbReference>
<dbReference type="GO" id="GO:0045892">
    <property type="term" value="P:negative regulation of DNA-templated transcription"/>
    <property type="evidence" value="ECO:0007669"/>
    <property type="project" value="UniProtKB-UniRule"/>
</dbReference>
<dbReference type="Gene3D" id="3.30.450.40">
    <property type="match status" value="1"/>
</dbReference>
<dbReference type="Gene3D" id="3.30.390.60">
    <property type="entry name" value="Heat-inducible transcription repressor hrca homolog, domain 3"/>
    <property type="match status" value="1"/>
</dbReference>
<dbReference type="Gene3D" id="1.10.10.10">
    <property type="entry name" value="Winged helix-like DNA-binding domain superfamily/Winged helix DNA-binding domain"/>
    <property type="match status" value="1"/>
</dbReference>
<dbReference type="HAMAP" id="MF_00081">
    <property type="entry name" value="HrcA"/>
    <property type="match status" value="1"/>
</dbReference>
<dbReference type="InterPro" id="IPR029016">
    <property type="entry name" value="GAF-like_dom_sf"/>
</dbReference>
<dbReference type="InterPro" id="IPR002571">
    <property type="entry name" value="HrcA"/>
</dbReference>
<dbReference type="InterPro" id="IPR021153">
    <property type="entry name" value="HrcA_C"/>
</dbReference>
<dbReference type="InterPro" id="IPR036388">
    <property type="entry name" value="WH-like_DNA-bd_sf"/>
</dbReference>
<dbReference type="InterPro" id="IPR036390">
    <property type="entry name" value="WH_DNA-bd_sf"/>
</dbReference>
<dbReference type="InterPro" id="IPR023120">
    <property type="entry name" value="WHTH_transcript_rep_HrcA_IDD"/>
</dbReference>
<dbReference type="NCBIfam" id="TIGR00331">
    <property type="entry name" value="hrcA"/>
    <property type="match status" value="1"/>
</dbReference>
<dbReference type="PANTHER" id="PTHR34824">
    <property type="entry name" value="HEAT-INDUCIBLE TRANSCRIPTION REPRESSOR HRCA"/>
    <property type="match status" value="1"/>
</dbReference>
<dbReference type="PANTHER" id="PTHR34824:SF1">
    <property type="entry name" value="HEAT-INDUCIBLE TRANSCRIPTION REPRESSOR HRCA"/>
    <property type="match status" value="1"/>
</dbReference>
<dbReference type="Pfam" id="PF01628">
    <property type="entry name" value="HrcA"/>
    <property type="match status" value="1"/>
</dbReference>
<dbReference type="PIRSF" id="PIRSF005485">
    <property type="entry name" value="HrcA"/>
    <property type="match status" value="1"/>
</dbReference>
<dbReference type="SUPFAM" id="SSF55781">
    <property type="entry name" value="GAF domain-like"/>
    <property type="match status" value="1"/>
</dbReference>
<dbReference type="SUPFAM" id="SSF46785">
    <property type="entry name" value="Winged helix' DNA-binding domain"/>
    <property type="match status" value="1"/>
</dbReference>
<reference key="1">
    <citation type="journal article" date="2010" name="Appl. Environ. Microbiol.">
        <title>Conserved symbiotic plasmid DNA sequences in the multireplicon pangenomic structure of Rhizobium etli.</title>
        <authorList>
            <person name="Gonzalez V."/>
            <person name="Acosta J.L."/>
            <person name="Santamaria R.I."/>
            <person name="Bustos P."/>
            <person name="Fernandez J.L."/>
            <person name="Hernandez Gonzalez I.L."/>
            <person name="Diaz R."/>
            <person name="Flores M."/>
            <person name="Palacios R."/>
            <person name="Mora J."/>
            <person name="Davila G."/>
        </authorList>
    </citation>
    <scope>NUCLEOTIDE SEQUENCE [LARGE SCALE GENOMIC DNA]</scope>
    <source>
        <strain>CIAT 652</strain>
    </source>
</reference>
<sequence length="362" mass="39483">MGTRSTSVSDAVAVLDERSREIFRRIVEGYLESGEPLGSRNLSRLLPMSLSPASVRNVMSDLEELGLIYSPHISAGRLPTQIGLRFFVDAFMQVGDLSAEDRANIDRQVRAESGGNPVESMMNEASRMLSGISRGAGLVITSKSDPVLKHVEFIRLEPTKALAVLVGDHDQVENRIIELPAGVTSSQLTEAANFLNAHMSGQTLPELRKQLSQLKDDVRHELDALSRDLVERGIAVWAGSPDEGKPAQLIIRGRANLLEGLGGAEDLDRLRMLFDDLEKKDSLIEILSLAESGSGVRIFIGSENKLFSLSGSSLIVAPYRDDDDRIVGAVGVIGPTRLNYSRIVPMVDYTAQLVSRLSRNPL</sequence>
<keyword id="KW-0678">Repressor</keyword>
<keyword id="KW-0346">Stress response</keyword>
<keyword id="KW-0804">Transcription</keyword>
<keyword id="KW-0805">Transcription regulation</keyword>
<name>HRCA_RHIE6</name>
<protein>
    <recommendedName>
        <fullName evidence="1">Heat-inducible transcription repressor HrcA</fullName>
    </recommendedName>
</protein>
<accession>B3PZA3</accession>
<organism>
    <name type="scientific">Rhizobium etli (strain CIAT 652)</name>
    <dbReference type="NCBI Taxonomy" id="491916"/>
    <lineage>
        <taxon>Bacteria</taxon>
        <taxon>Pseudomonadati</taxon>
        <taxon>Pseudomonadota</taxon>
        <taxon>Alphaproteobacteria</taxon>
        <taxon>Hyphomicrobiales</taxon>
        <taxon>Rhizobiaceae</taxon>
        <taxon>Rhizobium/Agrobacterium group</taxon>
        <taxon>Rhizobium</taxon>
    </lineage>
</organism>
<comment type="function">
    <text evidence="1">Negative regulator of class I heat shock genes (grpE-dnaK-dnaJ and groELS operons). Prevents heat-shock induction of these operons.</text>
</comment>
<comment type="similarity">
    <text evidence="1">Belongs to the HrcA family.</text>
</comment>